<reference key="1">
    <citation type="journal article" date="2005" name="J. Bacteriol.">
        <title>Completion of the genome sequence of Brucella abortus and comparison to the highly similar genomes of Brucella melitensis and Brucella suis.</title>
        <authorList>
            <person name="Halling S.M."/>
            <person name="Peterson-Burch B.D."/>
            <person name="Bricker B.J."/>
            <person name="Zuerner R.L."/>
            <person name="Qing Z."/>
            <person name="Li L.-L."/>
            <person name="Kapur V."/>
            <person name="Alt D.P."/>
            <person name="Olsen S.C."/>
        </authorList>
    </citation>
    <scope>NUCLEOTIDE SEQUENCE [LARGE SCALE GENOMIC DNA]</scope>
    <source>
        <strain>9-941</strain>
    </source>
</reference>
<keyword id="KW-0963">Cytoplasm</keyword>
<keyword id="KW-0312">Gluconeogenesis</keyword>
<keyword id="KW-0324">Glycolysis</keyword>
<keyword id="KW-0413">Isomerase</keyword>
<sequence length="549" mass="59642">MARDATKLEATVAKLKKHWAESAPRDMRAAFSTDPGRFGRYSLCLDDLLFDWSKCRVNDETMALLKELAVAADVEGRRAAMFAGEHINNTEDRAVLHVALRDTSSKEVLVDGHNVLPDVKHVLDRMAAFADGIRSGALKGATGRKITDIVNIGIGGSDLGPVMATLALAPYHDEPRAHFVSNIDGAHIADTLSPLDPASTLIIVASKTFTTIETMTNAQTARKWVADTLGEAAVGAHFAAVSTALDKVAAFGIPEDRVFGFWDWVGGRYSVWSAIGLPVMIAVGPDNFRKFLAGAHAMDVHFRDAPLEKNLPVMLGLIGYWHRAICGYGSRAIIPYDQRLSRLPAYLQQLDMESNGKSVTLDGKPVSGPTGPVVWGEPGTNGQHAFFQLLHQGTDTIPLEFIVAAKGHEPTLDHQHEMLMANCLAQSEALMKGRTLDEARAQLQAKNLPASQVERIAPHRVFSGNRPSLTLIHDMLDPYALGRLIALYEHRVFVEAQIFGINAFDQWGVELGKELATELLPVVSGKEGASGRDASTQGLVAHLHARRKA</sequence>
<comment type="function">
    <text evidence="1">Catalyzes the reversible isomerization of glucose-6-phosphate to fructose-6-phosphate.</text>
</comment>
<comment type="catalytic activity">
    <reaction evidence="1">
        <text>alpha-D-glucose 6-phosphate = beta-D-fructose 6-phosphate</text>
        <dbReference type="Rhea" id="RHEA:11816"/>
        <dbReference type="ChEBI" id="CHEBI:57634"/>
        <dbReference type="ChEBI" id="CHEBI:58225"/>
        <dbReference type="EC" id="5.3.1.9"/>
    </reaction>
</comment>
<comment type="pathway">
    <text evidence="1">Carbohydrate biosynthesis; gluconeogenesis.</text>
</comment>
<comment type="pathway">
    <text evidence="1">Carbohydrate degradation; glycolysis; D-glyceraldehyde 3-phosphate and glycerone phosphate from D-glucose: step 2/4.</text>
</comment>
<comment type="subcellular location">
    <subcellularLocation>
        <location evidence="1">Cytoplasm</location>
    </subcellularLocation>
</comment>
<comment type="similarity">
    <text evidence="1">Belongs to the GPI family.</text>
</comment>
<dbReference type="EC" id="5.3.1.9" evidence="1"/>
<dbReference type="EMBL" id="AE017223">
    <property type="protein sequence ID" value="AAX73711.1"/>
    <property type="molecule type" value="Genomic_DNA"/>
</dbReference>
<dbReference type="RefSeq" id="WP_002963449.1">
    <property type="nucleotide sequence ID" value="NC_006932.1"/>
</dbReference>
<dbReference type="SMR" id="Q57F73"/>
<dbReference type="EnsemblBacteria" id="AAX73711">
    <property type="protein sequence ID" value="AAX73711"/>
    <property type="gene ID" value="BruAb1_0311"/>
</dbReference>
<dbReference type="GeneID" id="93017245"/>
<dbReference type="KEGG" id="bmb:BruAb1_0311"/>
<dbReference type="HOGENOM" id="CLU_017947_3_1_5"/>
<dbReference type="UniPathway" id="UPA00109">
    <property type="reaction ID" value="UER00181"/>
</dbReference>
<dbReference type="UniPathway" id="UPA00138"/>
<dbReference type="PRO" id="PR:Q57F73"/>
<dbReference type="Proteomes" id="UP000000540">
    <property type="component" value="Chromosome I"/>
</dbReference>
<dbReference type="GO" id="GO:0005829">
    <property type="term" value="C:cytosol"/>
    <property type="evidence" value="ECO:0007669"/>
    <property type="project" value="TreeGrafter"/>
</dbReference>
<dbReference type="GO" id="GO:0097367">
    <property type="term" value="F:carbohydrate derivative binding"/>
    <property type="evidence" value="ECO:0007669"/>
    <property type="project" value="InterPro"/>
</dbReference>
<dbReference type="GO" id="GO:0004347">
    <property type="term" value="F:glucose-6-phosphate isomerase activity"/>
    <property type="evidence" value="ECO:0007669"/>
    <property type="project" value="UniProtKB-UniRule"/>
</dbReference>
<dbReference type="GO" id="GO:0048029">
    <property type="term" value="F:monosaccharide binding"/>
    <property type="evidence" value="ECO:0007669"/>
    <property type="project" value="TreeGrafter"/>
</dbReference>
<dbReference type="GO" id="GO:0006094">
    <property type="term" value="P:gluconeogenesis"/>
    <property type="evidence" value="ECO:0007669"/>
    <property type="project" value="UniProtKB-UniRule"/>
</dbReference>
<dbReference type="GO" id="GO:0051156">
    <property type="term" value="P:glucose 6-phosphate metabolic process"/>
    <property type="evidence" value="ECO:0007669"/>
    <property type="project" value="TreeGrafter"/>
</dbReference>
<dbReference type="GO" id="GO:0006096">
    <property type="term" value="P:glycolytic process"/>
    <property type="evidence" value="ECO:0007669"/>
    <property type="project" value="UniProtKB-UniRule"/>
</dbReference>
<dbReference type="CDD" id="cd05015">
    <property type="entry name" value="SIS_PGI_1"/>
    <property type="match status" value="1"/>
</dbReference>
<dbReference type="CDD" id="cd05016">
    <property type="entry name" value="SIS_PGI_2"/>
    <property type="match status" value="1"/>
</dbReference>
<dbReference type="FunFam" id="3.40.50.10490:FF:000018">
    <property type="entry name" value="Glucose-6-phosphate isomerase"/>
    <property type="match status" value="1"/>
</dbReference>
<dbReference type="Gene3D" id="1.10.1390.10">
    <property type="match status" value="1"/>
</dbReference>
<dbReference type="Gene3D" id="3.40.50.10490">
    <property type="entry name" value="Glucose-6-phosphate isomerase like protein, domain 1"/>
    <property type="match status" value="2"/>
</dbReference>
<dbReference type="HAMAP" id="MF_00473">
    <property type="entry name" value="G6P_isomerase"/>
    <property type="match status" value="1"/>
</dbReference>
<dbReference type="InterPro" id="IPR001672">
    <property type="entry name" value="G6P_Isomerase"/>
</dbReference>
<dbReference type="InterPro" id="IPR023096">
    <property type="entry name" value="G6P_Isomerase_C"/>
</dbReference>
<dbReference type="InterPro" id="IPR018189">
    <property type="entry name" value="Phosphoglucose_isomerase_CS"/>
</dbReference>
<dbReference type="InterPro" id="IPR046348">
    <property type="entry name" value="SIS_dom_sf"/>
</dbReference>
<dbReference type="InterPro" id="IPR035476">
    <property type="entry name" value="SIS_PGI_1"/>
</dbReference>
<dbReference type="InterPro" id="IPR035482">
    <property type="entry name" value="SIS_PGI_2"/>
</dbReference>
<dbReference type="NCBIfam" id="NF001211">
    <property type="entry name" value="PRK00179.1"/>
    <property type="match status" value="1"/>
</dbReference>
<dbReference type="PANTHER" id="PTHR11469">
    <property type="entry name" value="GLUCOSE-6-PHOSPHATE ISOMERASE"/>
    <property type="match status" value="1"/>
</dbReference>
<dbReference type="PANTHER" id="PTHR11469:SF1">
    <property type="entry name" value="GLUCOSE-6-PHOSPHATE ISOMERASE"/>
    <property type="match status" value="1"/>
</dbReference>
<dbReference type="Pfam" id="PF00342">
    <property type="entry name" value="PGI"/>
    <property type="match status" value="1"/>
</dbReference>
<dbReference type="PRINTS" id="PR00662">
    <property type="entry name" value="G6PISOMERASE"/>
</dbReference>
<dbReference type="SUPFAM" id="SSF53697">
    <property type="entry name" value="SIS domain"/>
    <property type="match status" value="1"/>
</dbReference>
<dbReference type="PROSITE" id="PS00765">
    <property type="entry name" value="P_GLUCOSE_ISOMERASE_1"/>
    <property type="match status" value="1"/>
</dbReference>
<dbReference type="PROSITE" id="PS00174">
    <property type="entry name" value="P_GLUCOSE_ISOMERASE_2"/>
    <property type="match status" value="1"/>
</dbReference>
<dbReference type="PROSITE" id="PS51463">
    <property type="entry name" value="P_GLUCOSE_ISOMERASE_3"/>
    <property type="match status" value="1"/>
</dbReference>
<evidence type="ECO:0000255" key="1">
    <source>
        <dbReference type="HAMAP-Rule" id="MF_00473"/>
    </source>
</evidence>
<accession>Q57F73</accession>
<gene>
    <name evidence="1" type="primary">pgi</name>
    <name type="ordered locus">BruAb1_0311</name>
</gene>
<name>G6PI_BRUAB</name>
<organism>
    <name type="scientific">Brucella abortus biovar 1 (strain 9-941)</name>
    <dbReference type="NCBI Taxonomy" id="262698"/>
    <lineage>
        <taxon>Bacteria</taxon>
        <taxon>Pseudomonadati</taxon>
        <taxon>Pseudomonadota</taxon>
        <taxon>Alphaproteobacteria</taxon>
        <taxon>Hyphomicrobiales</taxon>
        <taxon>Brucellaceae</taxon>
        <taxon>Brucella/Ochrobactrum group</taxon>
        <taxon>Brucella</taxon>
    </lineage>
</organism>
<protein>
    <recommendedName>
        <fullName evidence="1">Glucose-6-phosphate isomerase</fullName>
        <shortName evidence="1">GPI</shortName>
        <ecNumber evidence="1">5.3.1.9</ecNumber>
    </recommendedName>
    <alternativeName>
        <fullName evidence="1">Phosphoglucose isomerase</fullName>
        <shortName evidence="1">PGI</shortName>
    </alternativeName>
    <alternativeName>
        <fullName evidence="1">Phosphohexose isomerase</fullName>
        <shortName evidence="1">PHI</shortName>
    </alternativeName>
</protein>
<proteinExistence type="inferred from homology"/>
<feature type="chain" id="PRO_0000180608" description="Glucose-6-phosphate isomerase">
    <location>
        <begin position="1"/>
        <end position="549"/>
    </location>
</feature>
<feature type="active site" description="Proton donor" evidence="1">
    <location>
        <position position="353"/>
    </location>
</feature>
<feature type="active site" evidence="1">
    <location>
        <position position="384"/>
    </location>
</feature>
<feature type="active site" evidence="1">
    <location>
        <position position="513"/>
    </location>
</feature>